<dbReference type="EC" id="3.4.21.-"/>
<dbReference type="EMBL" id="CP000730">
    <property type="protein sequence ID" value="ABX29809.1"/>
    <property type="molecule type" value="Genomic_DNA"/>
</dbReference>
<dbReference type="RefSeq" id="WP_001039435.1">
    <property type="nucleotide sequence ID" value="NC_010079.1"/>
</dbReference>
<dbReference type="SMR" id="A8Z4N9"/>
<dbReference type="MEROPS" id="S01.503"/>
<dbReference type="KEGG" id="sax:USA300HOU_1806"/>
<dbReference type="HOGENOM" id="CLU_073589_2_0_9"/>
<dbReference type="GO" id="GO:0005576">
    <property type="term" value="C:extracellular region"/>
    <property type="evidence" value="ECO:0007669"/>
    <property type="project" value="UniProtKB-SubCell"/>
</dbReference>
<dbReference type="GO" id="GO:0004252">
    <property type="term" value="F:serine-type endopeptidase activity"/>
    <property type="evidence" value="ECO:0007669"/>
    <property type="project" value="InterPro"/>
</dbReference>
<dbReference type="GO" id="GO:0006508">
    <property type="term" value="P:proteolysis"/>
    <property type="evidence" value="ECO:0007669"/>
    <property type="project" value="UniProtKB-KW"/>
</dbReference>
<dbReference type="Gene3D" id="2.40.10.10">
    <property type="entry name" value="Trypsin-like serine proteases"/>
    <property type="match status" value="2"/>
</dbReference>
<dbReference type="InterPro" id="IPR009003">
    <property type="entry name" value="Peptidase_S1_PA"/>
</dbReference>
<dbReference type="InterPro" id="IPR043504">
    <property type="entry name" value="Peptidase_S1_PA_chymotrypsin"/>
</dbReference>
<dbReference type="InterPro" id="IPR008256">
    <property type="entry name" value="Peptidase_S1B"/>
</dbReference>
<dbReference type="InterPro" id="IPR008353">
    <property type="entry name" value="Peptidase_S1B_tx"/>
</dbReference>
<dbReference type="InterPro" id="IPR001254">
    <property type="entry name" value="Trypsin_dom"/>
</dbReference>
<dbReference type="InterPro" id="IPR028301">
    <property type="entry name" value="V8_his_AS"/>
</dbReference>
<dbReference type="PANTHER" id="PTHR43019:SF23">
    <property type="entry name" value="PROTEASE DO-LIKE 5, CHLOROPLASTIC"/>
    <property type="match status" value="1"/>
</dbReference>
<dbReference type="PANTHER" id="PTHR43019">
    <property type="entry name" value="SERINE ENDOPROTEASE DEGS"/>
    <property type="match status" value="1"/>
</dbReference>
<dbReference type="Pfam" id="PF00089">
    <property type="entry name" value="Trypsin"/>
    <property type="match status" value="1"/>
</dbReference>
<dbReference type="PRINTS" id="PR01774">
    <property type="entry name" value="EXFOLTOXIN"/>
</dbReference>
<dbReference type="PRINTS" id="PR00839">
    <property type="entry name" value="V8PROTEASE"/>
</dbReference>
<dbReference type="SUPFAM" id="SSF50494">
    <property type="entry name" value="Trypsin-like serine proteases"/>
    <property type="match status" value="1"/>
</dbReference>
<dbReference type="PROSITE" id="PS00672">
    <property type="entry name" value="V8_HIS"/>
    <property type="match status" value="1"/>
</dbReference>
<name>SPLA_STAAT</name>
<sequence length="235" mass="25549">MNKNVMVKGLTALTILTSLGFAENISNQPHSIAKAEKNVKEITDATKEPYNSVVAFVGGTGVVVGKNTIVTNKHIAKSNDIFKNRVSAHHSSKGKGGGNYDVKDIVEYPGKEDLAIVHVHETSTEGLNFNKNVSYTKFADGAKVKDRISVIGYPKGAQTKYKMFESTGTINHISGTFMEFDAYAQPGNSGSPVLNSKHELIGILYAGSGKDESEKNFGVYFTPQLKEFIQNNIEK</sequence>
<proteinExistence type="inferred from homology"/>
<organism>
    <name type="scientific">Staphylococcus aureus (strain USA300 / TCH1516)</name>
    <dbReference type="NCBI Taxonomy" id="451516"/>
    <lineage>
        <taxon>Bacteria</taxon>
        <taxon>Bacillati</taxon>
        <taxon>Bacillota</taxon>
        <taxon>Bacilli</taxon>
        <taxon>Bacillales</taxon>
        <taxon>Staphylococcaceae</taxon>
        <taxon>Staphylococcus</taxon>
    </lineage>
</organism>
<keyword id="KW-0378">Hydrolase</keyword>
<keyword id="KW-0645">Protease</keyword>
<keyword id="KW-0964">Secreted</keyword>
<keyword id="KW-0720">Serine protease</keyword>
<keyword id="KW-0732">Signal</keyword>
<gene>
    <name type="primary">splA</name>
    <name type="ordered locus">USA300HOU_1806</name>
</gene>
<evidence type="ECO:0000250" key="1"/>
<evidence type="ECO:0000305" key="2"/>
<protein>
    <recommendedName>
        <fullName>Serine protease SplA</fullName>
        <ecNumber>3.4.21.-</ecNumber>
    </recommendedName>
</protein>
<feature type="signal peptide" evidence="1">
    <location>
        <begin position="1"/>
        <end position="35"/>
    </location>
</feature>
<feature type="chain" id="PRO_0000359535" description="Serine protease SplA">
    <location>
        <begin position="36"/>
        <end position="235"/>
    </location>
</feature>
<feature type="active site" description="Charge relay system" evidence="1">
    <location>
        <position position="74"/>
    </location>
</feature>
<feature type="active site" description="Charge relay system" evidence="1">
    <location>
        <position position="113"/>
    </location>
</feature>
<feature type="active site" description="Charge relay system" evidence="1">
    <location>
        <position position="189"/>
    </location>
</feature>
<accession>A8Z4N9</accession>
<reference key="1">
    <citation type="journal article" date="2007" name="BMC Microbiol.">
        <title>Subtle genetic changes enhance virulence of methicillin resistant and sensitive Staphylococcus aureus.</title>
        <authorList>
            <person name="Highlander S.K."/>
            <person name="Hulten K.G."/>
            <person name="Qin X."/>
            <person name="Jiang H."/>
            <person name="Yerrapragada S."/>
            <person name="Mason E.O. Jr."/>
            <person name="Shang Y."/>
            <person name="Williams T.M."/>
            <person name="Fortunov R.M."/>
            <person name="Liu Y."/>
            <person name="Igboeli O."/>
            <person name="Petrosino J."/>
            <person name="Tirumalai M."/>
            <person name="Uzman A."/>
            <person name="Fox G.E."/>
            <person name="Cardenas A.M."/>
            <person name="Muzny D.M."/>
            <person name="Hemphill L."/>
            <person name="Ding Y."/>
            <person name="Dugan S."/>
            <person name="Blyth P.R."/>
            <person name="Buhay C.J."/>
            <person name="Dinh H.H."/>
            <person name="Hawes A.C."/>
            <person name="Holder M."/>
            <person name="Kovar C.L."/>
            <person name="Lee S.L."/>
            <person name="Liu W."/>
            <person name="Nazareth L.V."/>
            <person name="Wang Q."/>
            <person name="Zhou J."/>
            <person name="Kaplan S.L."/>
            <person name="Weinstock G.M."/>
        </authorList>
    </citation>
    <scope>NUCLEOTIDE SEQUENCE [LARGE SCALE GENOMIC DNA]</scope>
    <source>
        <strain>USA300 / TCH1516</strain>
    </source>
</reference>
<comment type="subcellular location">
    <subcellularLocation>
        <location evidence="1">Secreted</location>
    </subcellularLocation>
</comment>
<comment type="similarity">
    <text evidence="2">Belongs to the peptidase S1B family.</text>
</comment>